<organism>
    <name type="scientific">Thermosipho melanesiensis (strain DSM 12029 / CIP 104789 / BI429)</name>
    <dbReference type="NCBI Taxonomy" id="391009"/>
    <lineage>
        <taxon>Bacteria</taxon>
        <taxon>Thermotogati</taxon>
        <taxon>Thermotogota</taxon>
        <taxon>Thermotogae</taxon>
        <taxon>Thermotogales</taxon>
        <taxon>Fervidobacteriaceae</taxon>
        <taxon>Thermosipho</taxon>
    </lineage>
</organism>
<sequence length="115" mass="13347">MSMDNLIRIIEKDQVKEVPEFRPGDTVRVYVKFKEGNKERTQAFEGIVISLRGSGVGKTFTVRRIGANGIGVERIFPLYAPIIEKIEVVRRGKVRRAKLYYLRNIRGKVKIKERR</sequence>
<name>RL19_THEM4</name>
<comment type="function">
    <text evidence="1">This protein is located at the 30S-50S ribosomal subunit interface and may play a role in the structure and function of the aminoacyl-tRNA binding site.</text>
</comment>
<comment type="similarity">
    <text evidence="1">Belongs to the bacterial ribosomal protein bL19 family.</text>
</comment>
<evidence type="ECO:0000255" key="1">
    <source>
        <dbReference type="HAMAP-Rule" id="MF_00402"/>
    </source>
</evidence>
<evidence type="ECO:0000305" key="2"/>
<proteinExistence type="inferred from homology"/>
<dbReference type="EMBL" id="CP000716">
    <property type="protein sequence ID" value="ABR31635.1"/>
    <property type="molecule type" value="Genomic_DNA"/>
</dbReference>
<dbReference type="SMR" id="A6LNY4"/>
<dbReference type="STRING" id="391009.Tmel_1800"/>
<dbReference type="KEGG" id="tme:Tmel_1800"/>
<dbReference type="eggNOG" id="COG0335">
    <property type="taxonomic scope" value="Bacteria"/>
</dbReference>
<dbReference type="HOGENOM" id="CLU_103507_2_1_0"/>
<dbReference type="OrthoDB" id="9803541at2"/>
<dbReference type="Proteomes" id="UP000001110">
    <property type="component" value="Chromosome"/>
</dbReference>
<dbReference type="GO" id="GO:0022625">
    <property type="term" value="C:cytosolic large ribosomal subunit"/>
    <property type="evidence" value="ECO:0007669"/>
    <property type="project" value="TreeGrafter"/>
</dbReference>
<dbReference type="GO" id="GO:0003735">
    <property type="term" value="F:structural constituent of ribosome"/>
    <property type="evidence" value="ECO:0007669"/>
    <property type="project" value="InterPro"/>
</dbReference>
<dbReference type="GO" id="GO:0006412">
    <property type="term" value="P:translation"/>
    <property type="evidence" value="ECO:0007669"/>
    <property type="project" value="UniProtKB-UniRule"/>
</dbReference>
<dbReference type="FunFam" id="2.30.30.790:FF:000001">
    <property type="entry name" value="50S ribosomal protein L19"/>
    <property type="match status" value="1"/>
</dbReference>
<dbReference type="Gene3D" id="2.30.30.790">
    <property type="match status" value="1"/>
</dbReference>
<dbReference type="HAMAP" id="MF_00402">
    <property type="entry name" value="Ribosomal_bL19"/>
    <property type="match status" value="1"/>
</dbReference>
<dbReference type="InterPro" id="IPR001857">
    <property type="entry name" value="Ribosomal_bL19"/>
</dbReference>
<dbReference type="InterPro" id="IPR018257">
    <property type="entry name" value="Ribosomal_bL19_CS"/>
</dbReference>
<dbReference type="InterPro" id="IPR038657">
    <property type="entry name" value="Ribosomal_bL19_sf"/>
</dbReference>
<dbReference type="InterPro" id="IPR008991">
    <property type="entry name" value="Translation_prot_SH3-like_sf"/>
</dbReference>
<dbReference type="NCBIfam" id="TIGR01024">
    <property type="entry name" value="rplS_bact"/>
    <property type="match status" value="1"/>
</dbReference>
<dbReference type="PANTHER" id="PTHR15680:SF9">
    <property type="entry name" value="LARGE RIBOSOMAL SUBUNIT PROTEIN BL19M"/>
    <property type="match status" value="1"/>
</dbReference>
<dbReference type="PANTHER" id="PTHR15680">
    <property type="entry name" value="RIBOSOMAL PROTEIN L19"/>
    <property type="match status" value="1"/>
</dbReference>
<dbReference type="Pfam" id="PF01245">
    <property type="entry name" value="Ribosomal_L19"/>
    <property type="match status" value="1"/>
</dbReference>
<dbReference type="PIRSF" id="PIRSF002191">
    <property type="entry name" value="Ribosomal_L19"/>
    <property type="match status" value="1"/>
</dbReference>
<dbReference type="PRINTS" id="PR00061">
    <property type="entry name" value="RIBOSOMALL19"/>
</dbReference>
<dbReference type="SUPFAM" id="SSF50104">
    <property type="entry name" value="Translation proteins SH3-like domain"/>
    <property type="match status" value="1"/>
</dbReference>
<dbReference type="PROSITE" id="PS01015">
    <property type="entry name" value="RIBOSOMAL_L19"/>
    <property type="match status" value="1"/>
</dbReference>
<keyword id="KW-0687">Ribonucleoprotein</keyword>
<keyword id="KW-0689">Ribosomal protein</keyword>
<gene>
    <name evidence="1" type="primary">rplS</name>
    <name type="ordered locus">Tmel_1800</name>
</gene>
<feature type="chain" id="PRO_1000060807" description="Large ribosomal subunit protein bL19">
    <location>
        <begin position="1"/>
        <end position="115"/>
    </location>
</feature>
<protein>
    <recommendedName>
        <fullName evidence="1">Large ribosomal subunit protein bL19</fullName>
    </recommendedName>
    <alternativeName>
        <fullName evidence="2">50S ribosomal protein L19</fullName>
    </alternativeName>
</protein>
<reference key="1">
    <citation type="submission" date="2007-05" db="EMBL/GenBank/DDBJ databases">
        <title>Complete sequence of Thermosipho melanesiensis BI429.</title>
        <authorList>
            <consortium name="US DOE Joint Genome Institute"/>
            <person name="Copeland A."/>
            <person name="Lucas S."/>
            <person name="Lapidus A."/>
            <person name="Barry K."/>
            <person name="Glavina del Rio T."/>
            <person name="Dalin E."/>
            <person name="Tice H."/>
            <person name="Pitluck S."/>
            <person name="Chertkov O."/>
            <person name="Brettin T."/>
            <person name="Bruce D."/>
            <person name="Detter J.C."/>
            <person name="Han C."/>
            <person name="Schmutz J."/>
            <person name="Larimer F."/>
            <person name="Land M."/>
            <person name="Hauser L."/>
            <person name="Kyrpides N."/>
            <person name="Mikhailova N."/>
            <person name="Nelson K."/>
            <person name="Gogarten J.P."/>
            <person name="Noll K."/>
            <person name="Richardson P."/>
        </authorList>
    </citation>
    <scope>NUCLEOTIDE SEQUENCE [LARGE SCALE GENOMIC DNA]</scope>
    <source>
        <strain>DSM 12029 / CIP 104789 / BI429</strain>
    </source>
</reference>
<accession>A6LNY4</accession>